<name>TRPB_PICTO</name>
<feature type="chain" id="PRO_0000099046" description="Tryptophan synthase beta chain">
    <location>
        <begin position="1"/>
        <end position="419"/>
    </location>
</feature>
<feature type="modified residue" description="N6-(pyridoxal phosphate)lysine" evidence="1">
    <location>
        <position position="113"/>
    </location>
</feature>
<comment type="function">
    <text evidence="1">The beta subunit is responsible for the synthesis of L-tryptophan from indole and L-serine.</text>
</comment>
<comment type="catalytic activity">
    <reaction evidence="1">
        <text>(1S,2R)-1-C-(indol-3-yl)glycerol 3-phosphate + L-serine = D-glyceraldehyde 3-phosphate + L-tryptophan + H2O</text>
        <dbReference type="Rhea" id="RHEA:10532"/>
        <dbReference type="ChEBI" id="CHEBI:15377"/>
        <dbReference type="ChEBI" id="CHEBI:33384"/>
        <dbReference type="ChEBI" id="CHEBI:57912"/>
        <dbReference type="ChEBI" id="CHEBI:58866"/>
        <dbReference type="ChEBI" id="CHEBI:59776"/>
        <dbReference type="EC" id="4.2.1.20"/>
    </reaction>
</comment>
<comment type="cofactor">
    <cofactor evidence="1">
        <name>pyridoxal 5'-phosphate</name>
        <dbReference type="ChEBI" id="CHEBI:597326"/>
    </cofactor>
</comment>
<comment type="pathway">
    <text evidence="1">Amino-acid biosynthesis; L-tryptophan biosynthesis; L-tryptophan from chorismate: step 5/5.</text>
</comment>
<comment type="subunit">
    <text evidence="1">Tetramer of two alpha and two beta chains.</text>
</comment>
<comment type="similarity">
    <text evidence="1">Belongs to the TrpB family.</text>
</comment>
<dbReference type="EC" id="4.2.1.20" evidence="1"/>
<dbReference type="EMBL" id="AE017261">
    <property type="protein sequence ID" value="AAT42931.1"/>
    <property type="molecule type" value="Genomic_DNA"/>
</dbReference>
<dbReference type="RefSeq" id="WP_011177147.1">
    <property type="nucleotide sequence ID" value="NC_005877.1"/>
</dbReference>
<dbReference type="SMR" id="Q6L271"/>
<dbReference type="FunCoup" id="Q6L271">
    <property type="interactions" value="156"/>
</dbReference>
<dbReference type="STRING" id="263820.PTO0346"/>
<dbReference type="PaxDb" id="263820-PTO0346"/>
<dbReference type="GeneID" id="2844845"/>
<dbReference type="KEGG" id="pto:PTO0346"/>
<dbReference type="PATRIC" id="fig|263820.9.peg.368"/>
<dbReference type="eggNOG" id="arCOG01432">
    <property type="taxonomic scope" value="Archaea"/>
</dbReference>
<dbReference type="HOGENOM" id="CLU_042858_1_0_2"/>
<dbReference type="InParanoid" id="Q6L271"/>
<dbReference type="OrthoDB" id="371827at2157"/>
<dbReference type="UniPathway" id="UPA00035">
    <property type="reaction ID" value="UER00044"/>
</dbReference>
<dbReference type="Proteomes" id="UP000000438">
    <property type="component" value="Chromosome"/>
</dbReference>
<dbReference type="GO" id="GO:0005737">
    <property type="term" value="C:cytoplasm"/>
    <property type="evidence" value="ECO:0007669"/>
    <property type="project" value="TreeGrafter"/>
</dbReference>
<dbReference type="GO" id="GO:0052684">
    <property type="term" value="F:L-serine hydro-lyase (adding indole, L-tryptophan-forming) activity"/>
    <property type="evidence" value="ECO:0007669"/>
    <property type="project" value="TreeGrafter"/>
</dbReference>
<dbReference type="GO" id="GO:0030170">
    <property type="term" value="F:pyridoxal phosphate binding"/>
    <property type="evidence" value="ECO:0007669"/>
    <property type="project" value="InterPro"/>
</dbReference>
<dbReference type="GO" id="GO:0004834">
    <property type="term" value="F:tryptophan synthase activity"/>
    <property type="evidence" value="ECO:0007669"/>
    <property type="project" value="UniProtKB-UniRule"/>
</dbReference>
<dbReference type="CDD" id="cd06446">
    <property type="entry name" value="Trp-synth_B"/>
    <property type="match status" value="1"/>
</dbReference>
<dbReference type="Gene3D" id="3.40.50.1100">
    <property type="match status" value="2"/>
</dbReference>
<dbReference type="HAMAP" id="MF_00133">
    <property type="entry name" value="Trp_synth_beta"/>
    <property type="match status" value="1"/>
</dbReference>
<dbReference type="InterPro" id="IPR006316">
    <property type="entry name" value="Trp_synth_b-like"/>
</dbReference>
<dbReference type="InterPro" id="IPR006654">
    <property type="entry name" value="Trp_synth_beta"/>
</dbReference>
<dbReference type="InterPro" id="IPR023026">
    <property type="entry name" value="Trp_synth_beta/beta-like"/>
</dbReference>
<dbReference type="InterPro" id="IPR001926">
    <property type="entry name" value="TrpB-like_PALP"/>
</dbReference>
<dbReference type="InterPro" id="IPR036052">
    <property type="entry name" value="TrpB-like_PALP_sf"/>
</dbReference>
<dbReference type="NCBIfam" id="NF009057">
    <property type="entry name" value="PRK12391.1"/>
    <property type="match status" value="1"/>
</dbReference>
<dbReference type="NCBIfam" id="TIGR01415">
    <property type="entry name" value="trpB_rel"/>
    <property type="match status" value="1"/>
</dbReference>
<dbReference type="PANTHER" id="PTHR48077:SF6">
    <property type="entry name" value="TRYPTOPHAN SYNTHASE"/>
    <property type="match status" value="1"/>
</dbReference>
<dbReference type="PANTHER" id="PTHR48077">
    <property type="entry name" value="TRYPTOPHAN SYNTHASE-RELATED"/>
    <property type="match status" value="1"/>
</dbReference>
<dbReference type="Pfam" id="PF00291">
    <property type="entry name" value="PALP"/>
    <property type="match status" value="1"/>
</dbReference>
<dbReference type="PIRSF" id="PIRSF001413">
    <property type="entry name" value="Trp_syn_beta"/>
    <property type="match status" value="1"/>
</dbReference>
<dbReference type="PIRSF" id="PIRSF500824">
    <property type="entry name" value="TrpB_prok"/>
    <property type="match status" value="1"/>
</dbReference>
<dbReference type="SUPFAM" id="SSF53686">
    <property type="entry name" value="Tryptophan synthase beta subunit-like PLP-dependent enzymes"/>
    <property type="match status" value="1"/>
</dbReference>
<accession>Q6L271</accession>
<reference key="1">
    <citation type="journal article" date="2004" name="Proc. Natl. Acad. Sci. U.S.A.">
        <title>Genome sequence of Picrophilus torridus and its implications for life around pH 0.</title>
        <authorList>
            <person name="Fuetterer O."/>
            <person name="Angelov A."/>
            <person name="Liesegang H."/>
            <person name="Gottschalk G."/>
            <person name="Schleper C."/>
            <person name="Schepers B."/>
            <person name="Dock C."/>
            <person name="Antranikian G."/>
            <person name="Liebl W."/>
        </authorList>
    </citation>
    <scope>NUCLEOTIDE SEQUENCE [LARGE SCALE GENOMIC DNA]</scope>
    <source>
        <strain>ATCC 700027 / DSM 9790 / JCM 10055 / NBRC 100828 / KAW 2/3</strain>
    </source>
</reference>
<organism>
    <name type="scientific">Picrophilus torridus (strain ATCC 700027 / DSM 9790 / JCM 10055 / NBRC 100828 / KAW 2/3)</name>
    <dbReference type="NCBI Taxonomy" id="1122961"/>
    <lineage>
        <taxon>Archaea</taxon>
        <taxon>Methanobacteriati</taxon>
        <taxon>Thermoplasmatota</taxon>
        <taxon>Thermoplasmata</taxon>
        <taxon>Thermoplasmatales</taxon>
        <taxon>Picrophilaceae</taxon>
        <taxon>Picrophilus</taxon>
    </lineage>
</organism>
<evidence type="ECO:0000255" key="1">
    <source>
        <dbReference type="HAMAP-Rule" id="MF_00133"/>
    </source>
</evidence>
<gene>
    <name evidence="1" type="primary">trpB</name>
    <name type="ordered locus">PTO0346</name>
</gene>
<proteinExistence type="inferred from homology"/>
<keyword id="KW-0028">Amino-acid biosynthesis</keyword>
<keyword id="KW-0057">Aromatic amino acid biosynthesis</keyword>
<keyword id="KW-0456">Lyase</keyword>
<keyword id="KW-0663">Pyridoxal phosphate</keyword>
<keyword id="KW-0822">Tryptophan biosynthesis</keyword>
<protein>
    <recommendedName>
        <fullName evidence="1">Tryptophan synthase beta chain</fullName>
        <ecNumber evidence="1">4.2.1.20</ecNumber>
    </recommendedName>
</protein>
<sequence>MSEEFKSLLSSDIIPENWYNVTPDLPEPLPPPRDTKSDFSSINLLNKILPKEVLKQEFTFKRYEKIPDEIIDKYIQIGRPTPLIRAKNLEKYLDYGGKIFFKFEGATATGSHKINTAIAQAYYAMNENANGVTTETGAGQWGSATALAASLYNLKSQIFMVRVSYEQKPLRKVVMSLYNSSVVPSPSNLTEFGRKILSENPDHPGTLGIGISEAVEYALDHNYRYMVASVMNAALTHQSVIGQESIKQMELLGEFPDVLFGCVGGGSNFGGFAFPFLPINDDIEIYATTAQEVPKFSQGEYKYDLMDTAGVLPAVRMYSLGADFVPPKIYAGGLRYHGAAPSLSLLINHGRIKSDEVTEEQVKNAIKTFANTQGFIIAPESGHAVATAIKYAREHKDEKKTLLINVSGHGLLDLSIFSD</sequence>